<protein>
    <recommendedName>
        <fullName evidence="1">Glycerol-3-phosphate acyltransferase</fullName>
    </recommendedName>
    <alternativeName>
        <fullName evidence="1">Acyl-PO4 G3P acyltransferase</fullName>
    </alternativeName>
    <alternativeName>
        <fullName evidence="1">Acyl-phosphate--glycerol-3-phosphate acyltransferase</fullName>
    </alternativeName>
    <alternativeName>
        <fullName evidence="1">G3P acyltransferase</fullName>
        <shortName evidence="1">GPAT</shortName>
        <ecNumber evidence="1">2.3.1.275</ecNumber>
    </alternativeName>
    <alternativeName>
        <fullName evidence="1">Lysophosphatidic acid synthase</fullName>
        <shortName evidence="1">LPA synthase</shortName>
    </alternativeName>
</protein>
<sequence>MMIIVMLLLSYLIGAFPSGFVIGKLFFKKDIRQFGSGNTGATNSFRVLGRPAGFLVTFLDIFKGFITVFFPLWLPVHADGPISTFFTNGLIVGLFAILGHVYPVYLKFQGGKAVATSAGVVLGVNPILLLILAIIFFIVLKIFKYVSLASIVAAICCVIGSLIIQDYILLVVSFLVSIILIIRHRSNIARIFRGEEPKIKWM</sequence>
<evidence type="ECO:0000255" key="1">
    <source>
        <dbReference type="HAMAP-Rule" id="MF_01043"/>
    </source>
</evidence>
<comment type="function">
    <text evidence="1">Catalyzes the transfer of an acyl group from acyl-phosphate (acyl-PO(4)) to glycerol-3-phosphate (G3P) to form lysophosphatidic acid (LPA). This enzyme utilizes acyl-phosphate as fatty acyl donor, but not acyl-CoA or acyl-ACP.</text>
</comment>
<comment type="catalytic activity">
    <reaction evidence="1">
        <text>an acyl phosphate + sn-glycerol 3-phosphate = a 1-acyl-sn-glycero-3-phosphate + phosphate</text>
        <dbReference type="Rhea" id="RHEA:34075"/>
        <dbReference type="ChEBI" id="CHEBI:43474"/>
        <dbReference type="ChEBI" id="CHEBI:57597"/>
        <dbReference type="ChEBI" id="CHEBI:57970"/>
        <dbReference type="ChEBI" id="CHEBI:59918"/>
        <dbReference type="EC" id="2.3.1.275"/>
    </reaction>
</comment>
<comment type="pathway">
    <text evidence="1">Lipid metabolism; phospholipid metabolism.</text>
</comment>
<comment type="subunit">
    <text evidence="1">Probably interacts with PlsX.</text>
</comment>
<comment type="subcellular location">
    <subcellularLocation>
        <location evidence="1">Cell membrane</location>
        <topology evidence="1">Multi-pass membrane protein</topology>
    </subcellularLocation>
</comment>
<comment type="similarity">
    <text evidence="1">Belongs to the PlsY family.</text>
</comment>
<dbReference type="EC" id="2.3.1.275" evidence="1"/>
<dbReference type="EMBL" id="CP000703">
    <property type="protein sequence ID" value="ABQ49209.1"/>
    <property type="molecule type" value="Genomic_DNA"/>
</dbReference>
<dbReference type="RefSeq" id="WP_000972779.1">
    <property type="nucleotide sequence ID" value="NC_009487.1"/>
</dbReference>
<dbReference type="SMR" id="A5ISN6"/>
<dbReference type="KEGG" id="saj:SaurJH9_1415"/>
<dbReference type="HOGENOM" id="CLU_081254_4_0_9"/>
<dbReference type="UniPathway" id="UPA00085"/>
<dbReference type="GO" id="GO:0005886">
    <property type="term" value="C:plasma membrane"/>
    <property type="evidence" value="ECO:0007669"/>
    <property type="project" value="UniProtKB-SubCell"/>
</dbReference>
<dbReference type="GO" id="GO:0043772">
    <property type="term" value="F:acyl-phosphate glycerol-3-phosphate acyltransferase activity"/>
    <property type="evidence" value="ECO:0007669"/>
    <property type="project" value="UniProtKB-UniRule"/>
</dbReference>
<dbReference type="GO" id="GO:0008654">
    <property type="term" value="P:phospholipid biosynthetic process"/>
    <property type="evidence" value="ECO:0007669"/>
    <property type="project" value="UniProtKB-UniRule"/>
</dbReference>
<dbReference type="HAMAP" id="MF_01043">
    <property type="entry name" value="PlsY"/>
    <property type="match status" value="1"/>
</dbReference>
<dbReference type="InterPro" id="IPR003811">
    <property type="entry name" value="G3P_acylTferase_PlsY"/>
</dbReference>
<dbReference type="NCBIfam" id="TIGR00023">
    <property type="entry name" value="glycerol-3-phosphate 1-O-acyltransferase PlsY"/>
    <property type="match status" value="1"/>
</dbReference>
<dbReference type="PANTHER" id="PTHR30309:SF0">
    <property type="entry name" value="GLYCEROL-3-PHOSPHATE ACYLTRANSFERASE-RELATED"/>
    <property type="match status" value="1"/>
</dbReference>
<dbReference type="PANTHER" id="PTHR30309">
    <property type="entry name" value="INNER MEMBRANE PROTEIN YGIH"/>
    <property type="match status" value="1"/>
</dbReference>
<dbReference type="Pfam" id="PF02660">
    <property type="entry name" value="G3P_acyltransf"/>
    <property type="match status" value="1"/>
</dbReference>
<dbReference type="SMART" id="SM01207">
    <property type="entry name" value="G3P_acyltransf"/>
    <property type="match status" value="1"/>
</dbReference>
<name>PLSY_STAA9</name>
<reference key="1">
    <citation type="submission" date="2007-05" db="EMBL/GenBank/DDBJ databases">
        <title>Complete sequence of chromosome of Staphylococcus aureus subsp. aureus JH9.</title>
        <authorList>
            <consortium name="US DOE Joint Genome Institute"/>
            <person name="Copeland A."/>
            <person name="Lucas S."/>
            <person name="Lapidus A."/>
            <person name="Barry K."/>
            <person name="Detter J.C."/>
            <person name="Glavina del Rio T."/>
            <person name="Hammon N."/>
            <person name="Israni S."/>
            <person name="Pitluck S."/>
            <person name="Chain P."/>
            <person name="Malfatti S."/>
            <person name="Shin M."/>
            <person name="Vergez L."/>
            <person name="Schmutz J."/>
            <person name="Larimer F."/>
            <person name="Land M."/>
            <person name="Hauser L."/>
            <person name="Kyrpides N."/>
            <person name="Kim E."/>
            <person name="Tomasz A."/>
            <person name="Richardson P."/>
        </authorList>
    </citation>
    <scope>NUCLEOTIDE SEQUENCE [LARGE SCALE GENOMIC DNA]</scope>
    <source>
        <strain>JH9</strain>
    </source>
</reference>
<organism>
    <name type="scientific">Staphylococcus aureus (strain JH9)</name>
    <dbReference type="NCBI Taxonomy" id="359786"/>
    <lineage>
        <taxon>Bacteria</taxon>
        <taxon>Bacillati</taxon>
        <taxon>Bacillota</taxon>
        <taxon>Bacilli</taxon>
        <taxon>Bacillales</taxon>
        <taxon>Staphylococcaceae</taxon>
        <taxon>Staphylococcus</taxon>
    </lineage>
</organism>
<proteinExistence type="inferred from homology"/>
<gene>
    <name evidence="1" type="primary">plsY</name>
    <name type="ordered locus">SaurJH9_1415</name>
</gene>
<feature type="chain" id="PRO_1000084398" description="Glycerol-3-phosphate acyltransferase">
    <location>
        <begin position="1"/>
        <end position="202"/>
    </location>
</feature>
<feature type="transmembrane region" description="Helical" evidence="1">
    <location>
        <begin position="2"/>
        <end position="22"/>
    </location>
</feature>
<feature type="transmembrane region" description="Helical" evidence="1">
    <location>
        <begin position="54"/>
        <end position="74"/>
    </location>
</feature>
<feature type="transmembrane region" description="Helical" evidence="1">
    <location>
        <begin position="85"/>
        <end position="105"/>
    </location>
</feature>
<feature type="transmembrane region" description="Helical" evidence="1">
    <location>
        <begin position="120"/>
        <end position="140"/>
    </location>
</feature>
<feature type="transmembrane region" description="Helical" evidence="1">
    <location>
        <begin position="141"/>
        <end position="161"/>
    </location>
</feature>
<feature type="transmembrane region" description="Helical" evidence="1">
    <location>
        <begin position="162"/>
        <end position="182"/>
    </location>
</feature>
<accession>A5ISN6</accession>
<keyword id="KW-1003">Cell membrane</keyword>
<keyword id="KW-0444">Lipid biosynthesis</keyword>
<keyword id="KW-0443">Lipid metabolism</keyword>
<keyword id="KW-0472">Membrane</keyword>
<keyword id="KW-0594">Phospholipid biosynthesis</keyword>
<keyword id="KW-1208">Phospholipid metabolism</keyword>
<keyword id="KW-0808">Transferase</keyword>
<keyword id="KW-0812">Transmembrane</keyword>
<keyword id="KW-1133">Transmembrane helix</keyword>